<sequence>MLSLATLDMLLSISEGELIEEMVVGLLAAPQLAIFFEKFPRIKRALMKDIPGWKQNLQQRIREASVPPGLANEFSLYQQSLLEDSPQFYAHLPDIVAQLQDLHSPFATQAKTLVQTADLAKNPPGGDSLQTLFLQRWRVSLILQTITIHHQLLEQEREQLLAELQRRLALSGALEPILTTNDNAAGRLWDMSQGHLQRGDYQLLLQYGDFLQQQPELIRLAEQLGRSRSAKAQPAPDARYEPYTVMVRQPDSVPEEVSGIHQSNDILRLLPTELVMLGMSELEFEFYRRLLERRLLTYRLQGDNWQEKTQQRPVSLKQNDEQPRGPFIVCVDTSGSMGGFNEQCAKAFCLALLRIALADNRRCYIMLFATEIIHYELSADNGIEQAIRFLNQHFRGGTDLAACLANTLNKMEDREWYDADAVIISDFIAQRLPEELVRKIKIQQQAHQHRFHAVAMSAYGKPGIMRIFDHIWRFDTSLKSRLIRRWKR</sequence>
<keyword id="KW-0143">Chaperone</keyword>
<keyword id="KW-0963">Cytoplasm</keyword>
<name>VIAA_YERP3</name>
<feature type="chain" id="PRO_1000069612" description="Regulatory protein ViaA">
    <location>
        <begin position="1"/>
        <end position="488"/>
    </location>
</feature>
<dbReference type="EMBL" id="CP000720">
    <property type="protein sequence ID" value="ABS46096.1"/>
    <property type="molecule type" value="Genomic_DNA"/>
</dbReference>
<dbReference type="RefSeq" id="WP_002212255.1">
    <property type="nucleotide sequence ID" value="NC_009708.1"/>
</dbReference>
<dbReference type="SMR" id="A7FCN0"/>
<dbReference type="GeneID" id="57974590"/>
<dbReference type="KEGG" id="ypi:YpsIP31758_0004"/>
<dbReference type="HOGENOM" id="CLU_022130_0_0_6"/>
<dbReference type="Proteomes" id="UP000002412">
    <property type="component" value="Chromosome"/>
</dbReference>
<dbReference type="GO" id="GO:0005829">
    <property type="term" value="C:cytosol"/>
    <property type="evidence" value="ECO:0007669"/>
    <property type="project" value="TreeGrafter"/>
</dbReference>
<dbReference type="CDD" id="cd01462">
    <property type="entry name" value="VWA_YIEM_type"/>
    <property type="match status" value="1"/>
</dbReference>
<dbReference type="Gene3D" id="3.40.50.410">
    <property type="entry name" value="von Willebrand factor, type A domain"/>
    <property type="match status" value="1"/>
</dbReference>
<dbReference type="HAMAP" id="MF_01626">
    <property type="entry name" value="ViaA"/>
    <property type="match status" value="1"/>
</dbReference>
<dbReference type="InterPro" id="IPR008912">
    <property type="entry name" value="Uncharacterised_CoxE"/>
</dbReference>
<dbReference type="InterPro" id="IPR023481">
    <property type="entry name" value="Uncharacterised_ViaA"/>
</dbReference>
<dbReference type="InterPro" id="IPR002035">
    <property type="entry name" value="VWF_A"/>
</dbReference>
<dbReference type="InterPro" id="IPR036465">
    <property type="entry name" value="vWFA_dom_sf"/>
</dbReference>
<dbReference type="NCBIfam" id="NF008230">
    <property type="entry name" value="PRK10997.1"/>
    <property type="match status" value="1"/>
</dbReference>
<dbReference type="PANTHER" id="PTHR36846">
    <property type="entry name" value="PROTEIN VIAA"/>
    <property type="match status" value="1"/>
</dbReference>
<dbReference type="PANTHER" id="PTHR36846:SF1">
    <property type="entry name" value="PROTEIN VIAA"/>
    <property type="match status" value="1"/>
</dbReference>
<dbReference type="Pfam" id="PF05762">
    <property type="entry name" value="VWA_CoxE"/>
    <property type="match status" value="1"/>
</dbReference>
<dbReference type="SMART" id="SM00327">
    <property type="entry name" value="VWA"/>
    <property type="match status" value="1"/>
</dbReference>
<dbReference type="SUPFAM" id="SSF53300">
    <property type="entry name" value="vWA-like"/>
    <property type="match status" value="1"/>
</dbReference>
<comment type="function">
    <text evidence="1">Component of the RavA-ViaA chaperone complex, which may act on the membrane to optimize the function of some of the respiratory chains. ViaA stimulates the ATPase activity of RavA.</text>
</comment>
<comment type="subunit">
    <text evidence="1">Homodimer. Interacts with RavA.</text>
</comment>
<comment type="subcellular location">
    <subcellularLocation>
        <location evidence="1">Cytoplasm</location>
    </subcellularLocation>
</comment>
<comment type="similarity">
    <text evidence="1">Belongs to the ViaA family.</text>
</comment>
<evidence type="ECO:0000255" key="1">
    <source>
        <dbReference type="HAMAP-Rule" id="MF_01626"/>
    </source>
</evidence>
<organism>
    <name type="scientific">Yersinia pseudotuberculosis serotype O:1b (strain IP 31758)</name>
    <dbReference type="NCBI Taxonomy" id="349747"/>
    <lineage>
        <taxon>Bacteria</taxon>
        <taxon>Pseudomonadati</taxon>
        <taxon>Pseudomonadota</taxon>
        <taxon>Gammaproteobacteria</taxon>
        <taxon>Enterobacterales</taxon>
        <taxon>Yersiniaceae</taxon>
        <taxon>Yersinia</taxon>
    </lineage>
</organism>
<protein>
    <recommendedName>
        <fullName evidence="1">Regulatory protein ViaA</fullName>
    </recommendedName>
    <alternativeName>
        <fullName evidence="1">VWA interacting with AAA+ ATPase</fullName>
    </alternativeName>
</protein>
<reference key="1">
    <citation type="journal article" date="2007" name="PLoS Genet.">
        <title>The complete genome sequence of Yersinia pseudotuberculosis IP31758, the causative agent of Far East scarlet-like fever.</title>
        <authorList>
            <person name="Eppinger M."/>
            <person name="Rosovitz M.J."/>
            <person name="Fricke W.F."/>
            <person name="Rasko D.A."/>
            <person name="Kokorina G."/>
            <person name="Fayolle C."/>
            <person name="Lindler L.E."/>
            <person name="Carniel E."/>
            <person name="Ravel J."/>
        </authorList>
    </citation>
    <scope>NUCLEOTIDE SEQUENCE [LARGE SCALE GENOMIC DNA]</scope>
    <source>
        <strain>IP 31758</strain>
    </source>
</reference>
<proteinExistence type="inferred from homology"/>
<accession>A7FCN0</accession>
<gene>
    <name evidence="1" type="primary">viaA</name>
    <name type="ordered locus">YpsIP31758_0004</name>
</gene>